<sequence length="452" mass="47838">MARRYFGTDGIRGKVGEGPITPEFVLRLGYAAGKVLAGADRWAKTGTRPTVLIGKDTRVSGYMLEAALEAGFSAAGVDVMLAGPMPTPGIAYLTRALRLAAGVVISASHNPYYDNGIKFFSADGNKLPDEVEAQIEEQLDQPLACAASEQLGKARRLDDAAGRYIEFCKSTFPAAFDLRGLKLVVDCAHGAAYDVAPHVFHELGADVIPIGVAPNGFNINDGVGATAPDALVRAVRANHADLGIALDGDADRLQVVDAAGRLYNGDELLYILVKDRIATEGKVEGAVGTLMTNMAVEVALQEAGVKFVRAAVGDRYVLEQLREHGWQLGAEGSGHILSLDRHSTGDGIVSALLVLAAMKRSDKTLAELLGGVTLFPQKLINVRMKPDADWKGSDVIRRAIAKAEDALNGRGRVLIRASGTEPVLRVMVEAENVADAVQYAESIASAVKQATA</sequence>
<proteinExistence type="inferred from homology"/>
<comment type="function">
    <text evidence="1">Catalyzes the conversion of glucosamine-6-phosphate to glucosamine-1-phosphate.</text>
</comment>
<comment type="catalytic activity">
    <reaction evidence="1">
        <text>alpha-D-glucosamine 1-phosphate = D-glucosamine 6-phosphate</text>
        <dbReference type="Rhea" id="RHEA:23424"/>
        <dbReference type="ChEBI" id="CHEBI:58516"/>
        <dbReference type="ChEBI" id="CHEBI:58725"/>
        <dbReference type="EC" id="5.4.2.10"/>
    </reaction>
</comment>
<comment type="cofactor">
    <cofactor evidence="1">
        <name>Mg(2+)</name>
        <dbReference type="ChEBI" id="CHEBI:18420"/>
    </cofactor>
    <text evidence="1">Binds 1 Mg(2+) ion per subunit.</text>
</comment>
<comment type="PTM">
    <text evidence="1">Activated by phosphorylation.</text>
</comment>
<comment type="similarity">
    <text evidence="1">Belongs to the phosphohexose mutase family.</text>
</comment>
<keyword id="KW-0413">Isomerase</keyword>
<keyword id="KW-0460">Magnesium</keyword>
<keyword id="KW-0479">Metal-binding</keyword>
<keyword id="KW-0597">Phosphoprotein</keyword>
<keyword id="KW-1185">Reference proteome</keyword>
<organism>
    <name type="scientific">Paraburkholderia xenovorans (strain LB400)</name>
    <dbReference type="NCBI Taxonomy" id="266265"/>
    <lineage>
        <taxon>Bacteria</taxon>
        <taxon>Pseudomonadati</taxon>
        <taxon>Pseudomonadota</taxon>
        <taxon>Betaproteobacteria</taxon>
        <taxon>Burkholderiales</taxon>
        <taxon>Burkholderiaceae</taxon>
        <taxon>Paraburkholderia</taxon>
    </lineage>
</organism>
<feature type="chain" id="PRO_0000301295" description="Phosphoglucosamine mutase">
    <location>
        <begin position="1"/>
        <end position="452"/>
    </location>
</feature>
<feature type="active site" description="Phosphoserine intermediate" evidence="1">
    <location>
        <position position="108"/>
    </location>
</feature>
<feature type="binding site" description="via phosphate group" evidence="1">
    <location>
        <position position="108"/>
    </location>
    <ligand>
        <name>Mg(2+)</name>
        <dbReference type="ChEBI" id="CHEBI:18420"/>
    </ligand>
</feature>
<feature type="binding site" evidence="1">
    <location>
        <position position="247"/>
    </location>
    <ligand>
        <name>Mg(2+)</name>
        <dbReference type="ChEBI" id="CHEBI:18420"/>
    </ligand>
</feature>
<feature type="binding site" evidence="1">
    <location>
        <position position="249"/>
    </location>
    <ligand>
        <name>Mg(2+)</name>
        <dbReference type="ChEBI" id="CHEBI:18420"/>
    </ligand>
</feature>
<feature type="binding site" evidence="1">
    <location>
        <position position="251"/>
    </location>
    <ligand>
        <name>Mg(2+)</name>
        <dbReference type="ChEBI" id="CHEBI:18420"/>
    </ligand>
</feature>
<feature type="modified residue" description="Phosphoserine" evidence="1">
    <location>
        <position position="108"/>
    </location>
</feature>
<evidence type="ECO:0000255" key="1">
    <source>
        <dbReference type="HAMAP-Rule" id="MF_01554"/>
    </source>
</evidence>
<gene>
    <name evidence="1" type="primary">glmM</name>
    <name type="ordered locus">Bxeno_A3151</name>
    <name type="ORF">Bxe_A1264</name>
</gene>
<protein>
    <recommendedName>
        <fullName evidence="1">Phosphoglucosamine mutase</fullName>
        <ecNumber evidence="1">5.4.2.10</ecNumber>
    </recommendedName>
</protein>
<reference key="1">
    <citation type="journal article" date="2006" name="Proc. Natl. Acad. Sci. U.S.A.">
        <title>Burkholderia xenovorans LB400 harbors a multi-replicon, 9.73-Mbp genome shaped for versatility.</title>
        <authorList>
            <person name="Chain P.S.G."/>
            <person name="Denef V.J."/>
            <person name="Konstantinidis K.T."/>
            <person name="Vergez L.M."/>
            <person name="Agullo L."/>
            <person name="Reyes V.L."/>
            <person name="Hauser L."/>
            <person name="Cordova M."/>
            <person name="Gomez L."/>
            <person name="Gonzalez M."/>
            <person name="Land M."/>
            <person name="Lao V."/>
            <person name="Larimer F."/>
            <person name="LiPuma J.J."/>
            <person name="Mahenthiralingam E."/>
            <person name="Malfatti S.A."/>
            <person name="Marx C.J."/>
            <person name="Parnell J.J."/>
            <person name="Ramette A."/>
            <person name="Richardson P."/>
            <person name="Seeger M."/>
            <person name="Smith D."/>
            <person name="Spilker T."/>
            <person name="Sul W.J."/>
            <person name="Tsoi T.V."/>
            <person name="Ulrich L.E."/>
            <person name="Zhulin I.B."/>
            <person name="Tiedje J.M."/>
        </authorList>
    </citation>
    <scope>NUCLEOTIDE SEQUENCE [LARGE SCALE GENOMIC DNA]</scope>
    <source>
        <strain>LB400</strain>
    </source>
</reference>
<name>GLMM_PARXL</name>
<accession>Q13W50</accession>
<dbReference type="EC" id="5.4.2.10" evidence="1"/>
<dbReference type="EMBL" id="CP000270">
    <property type="protein sequence ID" value="ABE31689.1"/>
    <property type="molecule type" value="Genomic_DNA"/>
</dbReference>
<dbReference type="RefSeq" id="WP_011489247.1">
    <property type="nucleotide sequence ID" value="NZ_CP008760.1"/>
</dbReference>
<dbReference type="SMR" id="Q13W50"/>
<dbReference type="STRING" id="266265.Bxe_A1264"/>
<dbReference type="KEGG" id="bxb:DR64_3423"/>
<dbReference type="KEGG" id="bxe:Bxe_A1264"/>
<dbReference type="PATRIC" id="fig|266265.5.peg.3312"/>
<dbReference type="eggNOG" id="COG1109">
    <property type="taxonomic scope" value="Bacteria"/>
</dbReference>
<dbReference type="OrthoDB" id="9803322at2"/>
<dbReference type="Proteomes" id="UP000001817">
    <property type="component" value="Chromosome 1"/>
</dbReference>
<dbReference type="GO" id="GO:0005829">
    <property type="term" value="C:cytosol"/>
    <property type="evidence" value="ECO:0007669"/>
    <property type="project" value="TreeGrafter"/>
</dbReference>
<dbReference type="GO" id="GO:0000287">
    <property type="term" value="F:magnesium ion binding"/>
    <property type="evidence" value="ECO:0007669"/>
    <property type="project" value="UniProtKB-UniRule"/>
</dbReference>
<dbReference type="GO" id="GO:0008966">
    <property type="term" value="F:phosphoglucosamine mutase activity"/>
    <property type="evidence" value="ECO:0007669"/>
    <property type="project" value="UniProtKB-UniRule"/>
</dbReference>
<dbReference type="GO" id="GO:0004615">
    <property type="term" value="F:phosphomannomutase activity"/>
    <property type="evidence" value="ECO:0007669"/>
    <property type="project" value="TreeGrafter"/>
</dbReference>
<dbReference type="GO" id="GO:0005975">
    <property type="term" value="P:carbohydrate metabolic process"/>
    <property type="evidence" value="ECO:0007669"/>
    <property type="project" value="InterPro"/>
</dbReference>
<dbReference type="GO" id="GO:0009252">
    <property type="term" value="P:peptidoglycan biosynthetic process"/>
    <property type="evidence" value="ECO:0007669"/>
    <property type="project" value="TreeGrafter"/>
</dbReference>
<dbReference type="GO" id="GO:0006048">
    <property type="term" value="P:UDP-N-acetylglucosamine biosynthetic process"/>
    <property type="evidence" value="ECO:0007669"/>
    <property type="project" value="TreeGrafter"/>
</dbReference>
<dbReference type="CDD" id="cd05802">
    <property type="entry name" value="GlmM"/>
    <property type="match status" value="1"/>
</dbReference>
<dbReference type="FunFam" id="3.30.310.50:FF:000001">
    <property type="entry name" value="Phosphoglucosamine mutase"/>
    <property type="match status" value="1"/>
</dbReference>
<dbReference type="FunFam" id="3.40.120.10:FF:000001">
    <property type="entry name" value="Phosphoglucosamine mutase"/>
    <property type="match status" value="1"/>
</dbReference>
<dbReference type="FunFam" id="3.40.120.10:FF:000003">
    <property type="entry name" value="Phosphoglucosamine mutase"/>
    <property type="match status" value="1"/>
</dbReference>
<dbReference type="Gene3D" id="3.40.120.10">
    <property type="entry name" value="Alpha-D-Glucose-1,6-Bisphosphate, subunit A, domain 3"/>
    <property type="match status" value="3"/>
</dbReference>
<dbReference type="Gene3D" id="3.30.310.50">
    <property type="entry name" value="Alpha-D-phosphohexomutase, C-terminal domain"/>
    <property type="match status" value="1"/>
</dbReference>
<dbReference type="HAMAP" id="MF_01554_B">
    <property type="entry name" value="GlmM_B"/>
    <property type="match status" value="1"/>
</dbReference>
<dbReference type="InterPro" id="IPR005844">
    <property type="entry name" value="A-D-PHexomutase_a/b/a-I"/>
</dbReference>
<dbReference type="InterPro" id="IPR016055">
    <property type="entry name" value="A-D-PHexomutase_a/b/a-I/II/III"/>
</dbReference>
<dbReference type="InterPro" id="IPR005845">
    <property type="entry name" value="A-D-PHexomutase_a/b/a-II"/>
</dbReference>
<dbReference type="InterPro" id="IPR005846">
    <property type="entry name" value="A-D-PHexomutase_a/b/a-III"/>
</dbReference>
<dbReference type="InterPro" id="IPR005843">
    <property type="entry name" value="A-D-PHexomutase_C"/>
</dbReference>
<dbReference type="InterPro" id="IPR036900">
    <property type="entry name" value="A-D-PHexomutase_C_sf"/>
</dbReference>
<dbReference type="InterPro" id="IPR016066">
    <property type="entry name" value="A-D-PHexomutase_CS"/>
</dbReference>
<dbReference type="InterPro" id="IPR005841">
    <property type="entry name" value="Alpha-D-phosphohexomutase_SF"/>
</dbReference>
<dbReference type="InterPro" id="IPR006352">
    <property type="entry name" value="GlmM_bact"/>
</dbReference>
<dbReference type="InterPro" id="IPR050060">
    <property type="entry name" value="Phosphoglucosamine_mutase"/>
</dbReference>
<dbReference type="NCBIfam" id="TIGR01455">
    <property type="entry name" value="glmM"/>
    <property type="match status" value="1"/>
</dbReference>
<dbReference type="NCBIfam" id="NF008139">
    <property type="entry name" value="PRK10887.1"/>
    <property type="match status" value="1"/>
</dbReference>
<dbReference type="PANTHER" id="PTHR42946:SF1">
    <property type="entry name" value="PHOSPHOGLUCOMUTASE (ALPHA-D-GLUCOSE-1,6-BISPHOSPHATE-DEPENDENT)"/>
    <property type="match status" value="1"/>
</dbReference>
<dbReference type="PANTHER" id="PTHR42946">
    <property type="entry name" value="PHOSPHOHEXOSE MUTASE"/>
    <property type="match status" value="1"/>
</dbReference>
<dbReference type="Pfam" id="PF02878">
    <property type="entry name" value="PGM_PMM_I"/>
    <property type="match status" value="1"/>
</dbReference>
<dbReference type="Pfam" id="PF02879">
    <property type="entry name" value="PGM_PMM_II"/>
    <property type="match status" value="1"/>
</dbReference>
<dbReference type="Pfam" id="PF02880">
    <property type="entry name" value="PGM_PMM_III"/>
    <property type="match status" value="1"/>
</dbReference>
<dbReference type="Pfam" id="PF00408">
    <property type="entry name" value="PGM_PMM_IV"/>
    <property type="match status" value="1"/>
</dbReference>
<dbReference type="PRINTS" id="PR00509">
    <property type="entry name" value="PGMPMM"/>
</dbReference>
<dbReference type="SUPFAM" id="SSF55957">
    <property type="entry name" value="Phosphoglucomutase, C-terminal domain"/>
    <property type="match status" value="1"/>
</dbReference>
<dbReference type="SUPFAM" id="SSF53738">
    <property type="entry name" value="Phosphoglucomutase, first 3 domains"/>
    <property type="match status" value="3"/>
</dbReference>
<dbReference type="PROSITE" id="PS00710">
    <property type="entry name" value="PGM_PMM"/>
    <property type="match status" value="1"/>
</dbReference>